<dbReference type="EMBL" id="BC125709">
    <property type="protein sequence ID" value="AAI25710.1"/>
    <property type="status" value="ALT_FRAME"/>
    <property type="molecule type" value="mRNA"/>
</dbReference>
<dbReference type="RefSeq" id="NP_001072733.2">
    <property type="nucleotide sequence ID" value="NM_001079265.2"/>
</dbReference>
<dbReference type="SMR" id="A0JM23"/>
<dbReference type="FunCoup" id="A0JM23">
    <property type="interactions" value="461"/>
</dbReference>
<dbReference type="STRING" id="8364.ENSXETP00000010243"/>
<dbReference type="PaxDb" id="8364-ENSXETP00000018542"/>
<dbReference type="DNASU" id="780190"/>
<dbReference type="GeneID" id="780190"/>
<dbReference type="KEGG" id="xtr:780190"/>
<dbReference type="AGR" id="Xenbase:XB-GENE-487873"/>
<dbReference type="CTD" id="27031"/>
<dbReference type="Xenbase" id="XB-GENE-487873">
    <property type="gene designation" value="nphp3"/>
</dbReference>
<dbReference type="InParanoid" id="A0JM23"/>
<dbReference type="OrthoDB" id="626167at2759"/>
<dbReference type="Proteomes" id="UP000008143">
    <property type="component" value="Chromosome 6"/>
</dbReference>
<dbReference type="GO" id="GO:0005929">
    <property type="term" value="C:cilium"/>
    <property type="evidence" value="ECO:0000250"/>
    <property type="project" value="UniProtKB"/>
</dbReference>
<dbReference type="GO" id="GO:0060271">
    <property type="term" value="P:cilium assembly"/>
    <property type="evidence" value="ECO:0000250"/>
    <property type="project" value="UniProtKB"/>
</dbReference>
<dbReference type="GO" id="GO:0090090">
    <property type="term" value="P:negative regulation of canonical Wnt signaling pathway"/>
    <property type="evidence" value="ECO:0000250"/>
    <property type="project" value="UniProtKB"/>
</dbReference>
<dbReference type="GO" id="GO:2000095">
    <property type="term" value="P:regulation of Wnt signaling pathway, planar cell polarity pathway"/>
    <property type="evidence" value="ECO:0000250"/>
    <property type="project" value="UniProtKB"/>
</dbReference>
<dbReference type="GO" id="GO:0016055">
    <property type="term" value="P:Wnt signaling pathway"/>
    <property type="evidence" value="ECO:0007669"/>
    <property type="project" value="UniProtKB-KW"/>
</dbReference>
<dbReference type="FunFam" id="1.25.40.10:FF:000150">
    <property type="entry name" value="Nephrocystin-3"/>
    <property type="match status" value="1"/>
</dbReference>
<dbReference type="FunFam" id="1.25.40.10:FF:000362">
    <property type="entry name" value="Nephrocystin-3"/>
    <property type="match status" value="1"/>
</dbReference>
<dbReference type="FunFam" id="3.40.50.300:FF:000693">
    <property type="entry name" value="Nephrocystin-3"/>
    <property type="match status" value="1"/>
</dbReference>
<dbReference type="FunFam" id="1.25.40.10:FF:000301">
    <property type="entry name" value="Nephronophthisis 3"/>
    <property type="match status" value="1"/>
</dbReference>
<dbReference type="Gene3D" id="3.40.50.300">
    <property type="entry name" value="P-loop containing nucleotide triphosphate hydrolases"/>
    <property type="match status" value="1"/>
</dbReference>
<dbReference type="Gene3D" id="1.25.40.10">
    <property type="entry name" value="Tetratricopeptide repeat domain"/>
    <property type="match status" value="3"/>
</dbReference>
<dbReference type="InterPro" id="IPR056884">
    <property type="entry name" value="NPHP3-like_N"/>
</dbReference>
<dbReference type="InterPro" id="IPR056886">
    <property type="entry name" value="NPHP3_ab_dom"/>
</dbReference>
<dbReference type="InterPro" id="IPR056883">
    <property type="entry name" value="NPHP3_hel"/>
</dbReference>
<dbReference type="InterPro" id="IPR027417">
    <property type="entry name" value="P-loop_NTPase"/>
</dbReference>
<dbReference type="InterPro" id="IPR011990">
    <property type="entry name" value="TPR-like_helical_dom_sf"/>
</dbReference>
<dbReference type="InterPro" id="IPR056885">
    <property type="entry name" value="TPR_NPHP3"/>
</dbReference>
<dbReference type="InterPro" id="IPR019734">
    <property type="entry name" value="TPR_rpt"/>
</dbReference>
<dbReference type="PANTHER" id="PTHR45641:SF19">
    <property type="entry name" value="NEPHROCYSTIN-3"/>
    <property type="match status" value="1"/>
</dbReference>
<dbReference type="PANTHER" id="PTHR45641">
    <property type="entry name" value="TETRATRICOPEPTIDE REPEAT PROTEIN (AFU_ORTHOLOGUE AFUA_6G03870)"/>
    <property type="match status" value="1"/>
</dbReference>
<dbReference type="Pfam" id="PF25022">
    <property type="entry name" value="NPHP3"/>
    <property type="match status" value="1"/>
</dbReference>
<dbReference type="Pfam" id="PF24884">
    <property type="entry name" value="NPHP3_hel"/>
    <property type="match status" value="1"/>
</dbReference>
<dbReference type="Pfam" id="PF24883">
    <property type="entry name" value="NPHP3_N"/>
    <property type="match status" value="1"/>
</dbReference>
<dbReference type="Pfam" id="PF13424">
    <property type="entry name" value="TPR_12"/>
    <property type="match status" value="2"/>
</dbReference>
<dbReference type="Pfam" id="PF13176">
    <property type="entry name" value="TPR_7"/>
    <property type="match status" value="1"/>
</dbReference>
<dbReference type="Pfam" id="PF24885">
    <property type="entry name" value="TPR_NPHP3"/>
    <property type="match status" value="1"/>
</dbReference>
<dbReference type="SMART" id="SM00028">
    <property type="entry name" value="TPR"/>
    <property type="match status" value="8"/>
</dbReference>
<dbReference type="SUPFAM" id="SSF52540">
    <property type="entry name" value="P-loop containing nucleoside triphosphate hydrolases"/>
    <property type="match status" value="1"/>
</dbReference>
<dbReference type="SUPFAM" id="SSF48452">
    <property type="entry name" value="TPR-like"/>
    <property type="match status" value="2"/>
</dbReference>
<dbReference type="PROSITE" id="PS50005">
    <property type="entry name" value="TPR"/>
    <property type="match status" value="8"/>
</dbReference>
<dbReference type="PROSITE" id="PS50293">
    <property type="entry name" value="TPR_REGION"/>
    <property type="match status" value="1"/>
</dbReference>
<accession>A0JM23</accession>
<sequence>MGTASSLVNPGEVIEDTYGGGGGEACVIPVEVKPKARLLRSSFRRGPRVIGASFKSTASVDLEYAAEYERLKKEYEIFRVSKNNEIASMQKKEVKLDEENKRLRAELQALQKTYQKILREKESAVEAKYQAMERAATFEHDRDKVKRQFKIFRETKEKEIQDLLRAKRDLEAKLQRLQAQGIQVFDPGESDSDDNGTELTVPGTQCEYWTSGGLGSEPSIGSMMQLQQSFRGPEFAHSSIDVEGPFANVNRDDWDAAVASLLQVTPLFSQSLWSNTVRCYLMYTAETQAEVKIFLKEYSPKLQRMCETSGYFFQVTFFPEECENQYFAVRKWEIEKSSIVILFICSSLPSCLQEDCEEAFLKNTEAKPCLIYHRIEDGRSDSEGLKQLLEQDTNKANKTKIVDHYGDPVEGANKIYCQLEQVINQDLLGIEITDPNAKDDSATKEEDDFWDVLWDVHDEQEQMEAFQQASHSICELGFQKYYDRLNDLVAAPAPIPPLLISGGPGSGKSLLLSKWIQLQQKHSPNTLMLYHFVGRPLSSSSEPSLMIKRLFLKLMQHSWSVSSLSLDPAKFLEEFPHWLEKLSIRYQGNIIIIIDSIDHIQQSEKHMKWLIDPLPVNVRVIVSVNVETCPQAWRLWPTLHLDPLNSKDVKSLINMECGRANIILTKEQERKLERHCRSATTCNALYVTLIAKLLTWAGSTGNIDDVLQLCLQCQDTVSLYRLALHSVQEVMPSAKDKEFMREILCFISASRNGVSECELMELCPGLTWPVLTSLIFHLYTLVLLKYSCGLIQFQHLQEILSFNILNFKAWDAVNLEYMQGDQSIISEYREKLIQHFNAQLSCDRVTWRSADELTWLYQQQGEKQKLHRCLMNLFVSQNLYKRGHFAELLSYWQLVGKDKISMASEYFDALKQYERSCEGEEKMTSLADLYETLGRFLKDLGLLSQAVTPLQRSLEIRETALDPDHPSVAQSLHQLAGVYVQSKKFGNAEQLYKQALEISENAYGSEHMRVARELDALAVLYQKQNKFEQAEQLRKKSLKIRQKSARRKGSMYGFALLRRRALQLEELTLGKDTSDNARTLNELGVLYYLQNNLETAETFLKRSLEMRERVLGADHPDCAQSINNLAALYNEKKQYDKAEELYERALDIRRRALSPDHPSLAYTVKHLAVLYKRKGKLDKAVPLYELAVEIRQKSFGPKHPSVATALVNLAVLYCQMKKQAEASPLYERAMKIYEDSLGRMHPRVGETLKNLAVLRYEEGDFEKAAELYKRAMEIKETETSVLGAKAHSGHSSSGGDTYSVQNALPVCAFPE</sequence>
<proteinExistence type="evidence at transcript level"/>
<reference key="1">
    <citation type="submission" date="2006-10" db="EMBL/GenBank/DDBJ databases">
        <authorList>
            <consortium name="NIH - Xenopus Gene Collection (XGC) project"/>
        </authorList>
    </citation>
    <scope>NUCLEOTIDE SEQUENCE [LARGE SCALE MRNA]</scope>
    <source>
        <tissue>Testis</tissue>
    </source>
</reference>
<evidence type="ECO:0000250" key="1"/>
<evidence type="ECO:0000255" key="2"/>
<evidence type="ECO:0000305" key="3"/>
<feature type="chain" id="PRO_0000402546" description="Nephrocystin-3">
    <location>
        <begin position="1"/>
        <end position="1311"/>
    </location>
</feature>
<feature type="repeat" description="TPR 1">
    <location>
        <begin position="889"/>
        <end position="923"/>
    </location>
</feature>
<feature type="repeat" description="TPR 2">
    <location>
        <begin position="927"/>
        <end position="960"/>
    </location>
</feature>
<feature type="repeat" description="TPR 3">
    <location>
        <begin position="969"/>
        <end position="1002"/>
    </location>
</feature>
<feature type="repeat" description="TPR 4">
    <location>
        <begin position="1011"/>
        <end position="1044"/>
    </location>
</feature>
<feature type="repeat" description="TPR 5">
    <location>
        <begin position="1077"/>
        <end position="1110"/>
    </location>
</feature>
<feature type="repeat" description="TPR 6">
    <location>
        <begin position="1119"/>
        <end position="1152"/>
    </location>
</feature>
<feature type="repeat" description="TPR 7">
    <location>
        <begin position="1161"/>
        <end position="1194"/>
    </location>
</feature>
<feature type="repeat" description="TPR 8">
    <location>
        <begin position="1203"/>
        <end position="1236"/>
    </location>
</feature>
<feature type="repeat" description="TPR 9">
    <location>
        <begin position="1245"/>
        <end position="1278"/>
    </location>
</feature>
<feature type="coiled-coil region" evidence="2">
    <location>
        <begin position="81"/>
        <end position="183"/>
    </location>
</feature>
<gene>
    <name type="primary">nphp3</name>
</gene>
<keyword id="KW-0966">Cell projection</keyword>
<keyword id="KW-0969">Cilium</keyword>
<keyword id="KW-0175">Coiled coil</keyword>
<keyword id="KW-1185">Reference proteome</keyword>
<keyword id="KW-0677">Repeat</keyword>
<keyword id="KW-0802">TPR repeat</keyword>
<keyword id="KW-0879">Wnt signaling pathway</keyword>
<organism>
    <name type="scientific">Xenopus tropicalis</name>
    <name type="common">Western clawed frog</name>
    <name type="synonym">Silurana tropicalis</name>
    <dbReference type="NCBI Taxonomy" id="8364"/>
    <lineage>
        <taxon>Eukaryota</taxon>
        <taxon>Metazoa</taxon>
        <taxon>Chordata</taxon>
        <taxon>Craniata</taxon>
        <taxon>Vertebrata</taxon>
        <taxon>Euteleostomi</taxon>
        <taxon>Amphibia</taxon>
        <taxon>Batrachia</taxon>
        <taxon>Anura</taxon>
        <taxon>Pipoidea</taxon>
        <taxon>Pipidae</taxon>
        <taxon>Xenopodinae</taxon>
        <taxon>Xenopus</taxon>
        <taxon>Silurana</taxon>
    </lineage>
</organism>
<name>NPHP3_XENTR</name>
<protein>
    <recommendedName>
        <fullName>Nephrocystin-3</fullName>
    </recommendedName>
</protein>
<comment type="function">
    <text evidence="1">Required for normal ciliary development and function. Inhibits disheveled-1-induced canonical Wnt-signaling activity and may also play a role in the control of non-canonical Wnt signaling that regulates planar cell polarity. Probably acts as a molecular switch between different Wnt signaling pathways. Required for proper convergent extension cell movements (By similarity).</text>
</comment>
<comment type="subcellular location">
    <subcellularLocation>
        <location evidence="1">Cell projection</location>
        <location evidence="1">Cilium</location>
    </subcellularLocation>
</comment>
<comment type="sequence caution" evidence="3">
    <conflict type="frameshift">
        <sequence resource="EMBL-CDS" id="AAI25710"/>
    </conflict>
</comment>